<name>EBP2_DROME</name>
<comment type="function">
    <text evidence="1">Required for the processing of the 27S pre-rRNA.</text>
</comment>
<comment type="interaction">
    <interactant intactId="EBI-243148">
        <id>Q9V9Z9</id>
    </interactant>
    <interactant intactId="EBI-266081">
        <id>Q9VZE6</id>
        <label>CG11583</label>
    </interactant>
    <organismsDiffer>false</organismsDiffer>
    <experiments>3</experiments>
</comment>
<comment type="subcellular location">
    <subcellularLocation>
        <location evidence="1">Nucleus</location>
        <location evidence="1">Nucleolus</location>
    </subcellularLocation>
</comment>
<comment type="similarity">
    <text evidence="4">Belongs to the EBP2 family.</text>
</comment>
<dbReference type="EMBL" id="AE014297">
    <property type="protein sequence ID" value="AAF57129.1"/>
    <property type="molecule type" value="Genomic_DNA"/>
</dbReference>
<dbReference type="EMBL" id="AY051756">
    <property type="protein sequence ID" value="AAK93180.1"/>
    <property type="molecule type" value="mRNA"/>
</dbReference>
<dbReference type="RefSeq" id="NP_651850.1">
    <property type="nucleotide sequence ID" value="NM_143593.4"/>
</dbReference>
<dbReference type="SMR" id="Q9V9Z9"/>
<dbReference type="BioGRID" id="68536">
    <property type="interactions" value="4"/>
</dbReference>
<dbReference type="DIP" id="DIP-22231N"/>
<dbReference type="FunCoup" id="Q9V9Z9">
    <property type="interactions" value="1668"/>
</dbReference>
<dbReference type="IntAct" id="Q9V9Z9">
    <property type="interactions" value="47"/>
</dbReference>
<dbReference type="STRING" id="7227.FBpp0085119"/>
<dbReference type="PaxDb" id="7227-FBpp0085119"/>
<dbReference type="DNASU" id="43691"/>
<dbReference type="EnsemblMetazoa" id="FBtr0085757">
    <property type="protein sequence ID" value="FBpp0085119"/>
    <property type="gene ID" value="FBgn0039828"/>
</dbReference>
<dbReference type="GeneID" id="43691"/>
<dbReference type="KEGG" id="dme:Dmel_CG1542"/>
<dbReference type="UCSC" id="CG1542-RA">
    <property type="organism name" value="d. melanogaster"/>
</dbReference>
<dbReference type="AGR" id="FB:FBgn0039828"/>
<dbReference type="FlyBase" id="FBgn0039828">
    <property type="gene designation" value="CG1542"/>
</dbReference>
<dbReference type="VEuPathDB" id="VectorBase:FBgn0039828"/>
<dbReference type="eggNOG" id="KOG3080">
    <property type="taxonomic scope" value="Eukaryota"/>
</dbReference>
<dbReference type="GeneTree" id="ENSGT00390000014984"/>
<dbReference type="HOGENOM" id="CLU_036007_1_0_1"/>
<dbReference type="InParanoid" id="Q9V9Z9"/>
<dbReference type="OMA" id="RETMFHR"/>
<dbReference type="OrthoDB" id="443772at2759"/>
<dbReference type="PhylomeDB" id="Q9V9Z9"/>
<dbReference type="Reactome" id="R-DME-6791226">
    <property type="pathway name" value="Major pathway of rRNA processing in the nucleolus and cytosol"/>
</dbReference>
<dbReference type="BioGRID-ORCS" id="43691">
    <property type="hits" value="0 hits in 1 CRISPR screen"/>
</dbReference>
<dbReference type="ChiTaRS" id="CG1542">
    <property type="organism name" value="fly"/>
</dbReference>
<dbReference type="GenomeRNAi" id="43691"/>
<dbReference type="PRO" id="PR:Q9V9Z9"/>
<dbReference type="Proteomes" id="UP000000803">
    <property type="component" value="Chromosome 3R"/>
</dbReference>
<dbReference type="Bgee" id="FBgn0039828">
    <property type="expression patterns" value="Expressed in egg chamber and 85 other cell types or tissues"/>
</dbReference>
<dbReference type="GO" id="GO:0034399">
    <property type="term" value="C:nuclear periphery"/>
    <property type="evidence" value="ECO:0000318"/>
    <property type="project" value="GO_Central"/>
</dbReference>
<dbReference type="GO" id="GO:0005730">
    <property type="term" value="C:nucleolus"/>
    <property type="evidence" value="ECO:0000250"/>
    <property type="project" value="FlyBase"/>
</dbReference>
<dbReference type="GO" id="GO:0030687">
    <property type="term" value="C:preribosome, large subunit precursor"/>
    <property type="evidence" value="ECO:0000318"/>
    <property type="project" value="GO_Central"/>
</dbReference>
<dbReference type="GO" id="GO:0003723">
    <property type="term" value="F:RNA binding"/>
    <property type="evidence" value="ECO:0000250"/>
    <property type="project" value="FlyBase"/>
</dbReference>
<dbReference type="GO" id="GO:0042273">
    <property type="term" value="P:ribosomal large subunit biogenesis"/>
    <property type="evidence" value="ECO:0000318"/>
    <property type="project" value="GO_Central"/>
</dbReference>
<dbReference type="GO" id="GO:0006364">
    <property type="term" value="P:rRNA processing"/>
    <property type="evidence" value="ECO:0000250"/>
    <property type="project" value="FlyBase"/>
</dbReference>
<dbReference type="InterPro" id="IPR008610">
    <property type="entry name" value="Ebp2"/>
</dbReference>
<dbReference type="PANTHER" id="PTHR13028">
    <property type="entry name" value="RRNA PROCESSING PROTEIN EBNA1-BINDING PROTEIN-RELATED"/>
    <property type="match status" value="1"/>
</dbReference>
<dbReference type="PANTHER" id="PTHR13028:SF0">
    <property type="entry name" value="RRNA-PROCESSING PROTEIN EBP2-RELATED"/>
    <property type="match status" value="1"/>
</dbReference>
<dbReference type="Pfam" id="PF05890">
    <property type="entry name" value="Ebp2"/>
    <property type="match status" value="1"/>
</dbReference>
<accession>Q9V9Z9</accession>
<organism>
    <name type="scientific">Drosophila melanogaster</name>
    <name type="common">Fruit fly</name>
    <dbReference type="NCBI Taxonomy" id="7227"/>
    <lineage>
        <taxon>Eukaryota</taxon>
        <taxon>Metazoa</taxon>
        <taxon>Ecdysozoa</taxon>
        <taxon>Arthropoda</taxon>
        <taxon>Hexapoda</taxon>
        <taxon>Insecta</taxon>
        <taxon>Pterygota</taxon>
        <taxon>Neoptera</taxon>
        <taxon>Endopterygota</taxon>
        <taxon>Diptera</taxon>
        <taxon>Brachycera</taxon>
        <taxon>Muscomorpha</taxon>
        <taxon>Ephydroidea</taxon>
        <taxon>Drosophilidae</taxon>
        <taxon>Drosophila</taxon>
        <taxon>Sophophora</taxon>
    </lineage>
</organism>
<keyword id="KW-0175">Coiled coil</keyword>
<keyword id="KW-0539">Nucleus</keyword>
<keyword id="KW-1185">Reference proteome</keyword>
<keyword id="KW-0690">Ribosome biogenesis</keyword>
<protein>
    <recommendedName>
        <fullName>Probable rRNA-processing protein EBP2 homolog</fullName>
    </recommendedName>
</protein>
<proteinExistence type="evidence at protein level"/>
<feature type="chain" id="PRO_0000119997" description="Probable rRNA-processing protein EBP2 homolog">
    <location>
        <begin position="1"/>
        <end position="307"/>
    </location>
</feature>
<feature type="region of interest" description="Disordered" evidence="3">
    <location>
        <begin position="1"/>
        <end position="22"/>
    </location>
</feature>
<feature type="region of interest" description="Disordered" evidence="3">
    <location>
        <begin position="189"/>
        <end position="208"/>
    </location>
</feature>
<feature type="region of interest" description="Disordered" evidence="3">
    <location>
        <begin position="236"/>
        <end position="307"/>
    </location>
</feature>
<feature type="coiled-coil region" evidence="2">
    <location>
        <begin position="205"/>
        <end position="252"/>
    </location>
</feature>
<feature type="compositionally biased region" description="Basic and acidic residues" evidence="3">
    <location>
        <begin position="236"/>
        <end position="245"/>
    </location>
</feature>
<feature type="compositionally biased region" description="Basic residues" evidence="3">
    <location>
        <begin position="246"/>
        <end position="266"/>
    </location>
</feature>
<feature type="compositionally biased region" description="Basic residues" evidence="3">
    <location>
        <begin position="294"/>
        <end position="307"/>
    </location>
</feature>
<evidence type="ECO:0000250" key="1"/>
<evidence type="ECO:0000255" key="2"/>
<evidence type="ECO:0000256" key="3">
    <source>
        <dbReference type="SAM" id="MobiDB-lite"/>
    </source>
</evidence>
<evidence type="ECO:0000305" key="4"/>
<reference key="1">
    <citation type="journal article" date="2000" name="Science">
        <title>The genome sequence of Drosophila melanogaster.</title>
        <authorList>
            <person name="Adams M.D."/>
            <person name="Celniker S.E."/>
            <person name="Holt R.A."/>
            <person name="Evans C.A."/>
            <person name="Gocayne J.D."/>
            <person name="Amanatides P.G."/>
            <person name="Scherer S.E."/>
            <person name="Li P.W."/>
            <person name="Hoskins R.A."/>
            <person name="Galle R.F."/>
            <person name="George R.A."/>
            <person name="Lewis S.E."/>
            <person name="Richards S."/>
            <person name="Ashburner M."/>
            <person name="Henderson S.N."/>
            <person name="Sutton G.G."/>
            <person name="Wortman J.R."/>
            <person name="Yandell M.D."/>
            <person name="Zhang Q."/>
            <person name="Chen L.X."/>
            <person name="Brandon R.C."/>
            <person name="Rogers Y.-H.C."/>
            <person name="Blazej R.G."/>
            <person name="Champe M."/>
            <person name="Pfeiffer B.D."/>
            <person name="Wan K.H."/>
            <person name="Doyle C."/>
            <person name="Baxter E.G."/>
            <person name="Helt G."/>
            <person name="Nelson C.R."/>
            <person name="Miklos G.L.G."/>
            <person name="Abril J.F."/>
            <person name="Agbayani A."/>
            <person name="An H.-J."/>
            <person name="Andrews-Pfannkoch C."/>
            <person name="Baldwin D."/>
            <person name="Ballew R.M."/>
            <person name="Basu A."/>
            <person name="Baxendale J."/>
            <person name="Bayraktaroglu L."/>
            <person name="Beasley E.M."/>
            <person name="Beeson K.Y."/>
            <person name="Benos P.V."/>
            <person name="Berman B.P."/>
            <person name="Bhandari D."/>
            <person name="Bolshakov S."/>
            <person name="Borkova D."/>
            <person name="Botchan M.R."/>
            <person name="Bouck J."/>
            <person name="Brokstein P."/>
            <person name="Brottier P."/>
            <person name="Burtis K.C."/>
            <person name="Busam D.A."/>
            <person name="Butler H."/>
            <person name="Cadieu E."/>
            <person name="Center A."/>
            <person name="Chandra I."/>
            <person name="Cherry J.M."/>
            <person name="Cawley S."/>
            <person name="Dahlke C."/>
            <person name="Davenport L.B."/>
            <person name="Davies P."/>
            <person name="de Pablos B."/>
            <person name="Delcher A."/>
            <person name="Deng Z."/>
            <person name="Mays A.D."/>
            <person name="Dew I."/>
            <person name="Dietz S.M."/>
            <person name="Dodson K."/>
            <person name="Doup L.E."/>
            <person name="Downes M."/>
            <person name="Dugan-Rocha S."/>
            <person name="Dunkov B.C."/>
            <person name="Dunn P."/>
            <person name="Durbin K.J."/>
            <person name="Evangelista C.C."/>
            <person name="Ferraz C."/>
            <person name="Ferriera S."/>
            <person name="Fleischmann W."/>
            <person name="Fosler C."/>
            <person name="Gabrielian A.E."/>
            <person name="Garg N.S."/>
            <person name="Gelbart W.M."/>
            <person name="Glasser K."/>
            <person name="Glodek A."/>
            <person name="Gong F."/>
            <person name="Gorrell J.H."/>
            <person name="Gu Z."/>
            <person name="Guan P."/>
            <person name="Harris M."/>
            <person name="Harris N.L."/>
            <person name="Harvey D.A."/>
            <person name="Heiman T.J."/>
            <person name="Hernandez J.R."/>
            <person name="Houck J."/>
            <person name="Hostin D."/>
            <person name="Houston K.A."/>
            <person name="Howland T.J."/>
            <person name="Wei M.-H."/>
            <person name="Ibegwam C."/>
            <person name="Jalali M."/>
            <person name="Kalush F."/>
            <person name="Karpen G.H."/>
            <person name="Ke Z."/>
            <person name="Kennison J.A."/>
            <person name="Ketchum K.A."/>
            <person name="Kimmel B.E."/>
            <person name="Kodira C.D."/>
            <person name="Kraft C.L."/>
            <person name="Kravitz S."/>
            <person name="Kulp D."/>
            <person name="Lai Z."/>
            <person name="Lasko P."/>
            <person name="Lei Y."/>
            <person name="Levitsky A.A."/>
            <person name="Li J.H."/>
            <person name="Li Z."/>
            <person name="Liang Y."/>
            <person name="Lin X."/>
            <person name="Liu X."/>
            <person name="Mattei B."/>
            <person name="McIntosh T.C."/>
            <person name="McLeod M.P."/>
            <person name="McPherson D."/>
            <person name="Merkulov G."/>
            <person name="Milshina N.V."/>
            <person name="Mobarry C."/>
            <person name="Morris J."/>
            <person name="Moshrefi A."/>
            <person name="Mount S.M."/>
            <person name="Moy M."/>
            <person name="Murphy B."/>
            <person name="Murphy L."/>
            <person name="Muzny D.M."/>
            <person name="Nelson D.L."/>
            <person name="Nelson D.R."/>
            <person name="Nelson K.A."/>
            <person name="Nixon K."/>
            <person name="Nusskern D.R."/>
            <person name="Pacleb J.M."/>
            <person name="Palazzolo M."/>
            <person name="Pittman G.S."/>
            <person name="Pan S."/>
            <person name="Pollard J."/>
            <person name="Puri V."/>
            <person name="Reese M.G."/>
            <person name="Reinert K."/>
            <person name="Remington K."/>
            <person name="Saunders R.D.C."/>
            <person name="Scheeler F."/>
            <person name="Shen H."/>
            <person name="Shue B.C."/>
            <person name="Siden-Kiamos I."/>
            <person name="Simpson M."/>
            <person name="Skupski M.P."/>
            <person name="Smith T.J."/>
            <person name="Spier E."/>
            <person name="Spradling A.C."/>
            <person name="Stapleton M."/>
            <person name="Strong R."/>
            <person name="Sun E."/>
            <person name="Svirskas R."/>
            <person name="Tector C."/>
            <person name="Turner R."/>
            <person name="Venter E."/>
            <person name="Wang A.H."/>
            <person name="Wang X."/>
            <person name="Wang Z.-Y."/>
            <person name="Wassarman D.A."/>
            <person name="Weinstock G.M."/>
            <person name="Weissenbach J."/>
            <person name="Williams S.M."/>
            <person name="Woodage T."/>
            <person name="Worley K.C."/>
            <person name="Wu D."/>
            <person name="Yang S."/>
            <person name="Yao Q.A."/>
            <person name="Ye J."/>
            <person name="Yeh R.-F."/>
            <person name="Zaveri J.S."/>
            <person name="Zhan M."/>
            <person name="Zhang G."/>
            <person name="Zhao Q."/>
            <person name="Zheng L."/>
            <person name="Zheng X.H."/>
            <person name="Zhong F.N."/>
            <person name="Zhong W."/>
            <person name="Zhou X."/>
            <person name="Zhu S.C."/>
            <person name="Zhu X."/>
            <person name="Smith H.O."/>
            <person name="Gibbs R.A."/>
            <person name="Myers E.W."/>
            <person name="Rubin G.M."/>
            <person name="Venter J.C."/>
        </authorList>
    </citation>
    <scope>NUCLEOTIDE SEQUENCE [LARGE SCALE GENOMIC DNA]</scope>
    <source>
        <strain>Berkeley</strain>
    </source>
</reference>
<reference key="2">
    <citation type="journal article" date="2002" name="Genome Biol.">
        <title>Annotation of the Drosophila melanogaster euchromatic genome: a systematic review.</title>
        <authorList>
            <person name="Misra S."/>
            <person name="Crosby M.A."/>
            <person name="Mungall C.J."/>
            <person name="Matthews B.B."/>
            <person name="Campbell K.S."/>
            <person name="Hradecky P."/>
            <person name="Huang Y."/>
            <person name="Kaminker J.S."/>
            <person name="Millburn G.H."/>
            <person name="Prochnik S.E."/>
            <person name="Smith C.D."/>
            <person name="Tupy J.L."/>
            <person name="Whitfield E.J."/>
            <person name="Bayraktaroglu L."/>
            <person name="Berman B.P."/>
            <person name="Bettencourt B.R."/>
            <person name="Celniker S.E."/>
            <person name="de Grey A.D.N.J."/>
            <person name="Drysdale R.A."/>
            <person name="Harris N.L."/>
            <person name="Richter J."/>
            <person name="Russo S."/>
            <person name="Schroeder A.J."/>
            <person name="Shu S.Q."/>
            <person name="Stapleton M."/>
            <person name="Yamada C."/>
            <person name="Ashburner M."/>
            <person name="Gelbart W.M."/>
            <person name="Rubin G.M."/>
            <person name="Lewis S.E."/>
        </authorList>
    </citation>
    <scope>GENOME REANNOTATION</scope>
    <source>
        <strain>Berkeley</strain>
    </source>
</reference>
<reference key="3">
    <citation type="journal article" date="2002" name="Genome Biol.">
        <title>A Drosophila full-length cDNA resource.</title>
        <authorList>
            <person name="Stapleton M."/>
            <person name="Carlson J.W."/>
            <person name="Brokstein P."/>
            <person name="Yu C."/>
            <person name="Champe M."/>
            <person name="George R.A."/>
            <person name="Guarin H."/>
            <person name="Kronmiller B."/>
            <person name="Pacleb J.M."/>
            <person name="Park S."/>
            <person name="Wan K.H."/>
            <person name="Rubin G.M."/>
            <person name="Celniker S.E."/>
        </authorList>
    </citation>
    <scope>NUCLEOTIDE SEQUENCE [LARGE SCALE MRNA]</scope>
    <source>
        <strain>Berkeley</strain>
        <tissue>Embryo</tissue>
    </source>
</reference>
<gene>
    <name type="ORF">CG1542</name>
</gene>
<sequence>MSDFEMEDSASGYDSGDNSDAELQAAFERGDLKPGLNVEFNGQRDKVNDVTKLLAKTEAIKMQLPWLERLDMINTLAPLAPELAVQLEKHEQKRANLFKGNAKLPYIRPEEDPVLNDFKREMLFHRQAQSAVLEAIPRLHELGIKTRRPDDYFAEMAKSDEHMQKVRANLMAKQQGQAKSERIKQIREQRKMGKMLAKQTKVQREAEKKDMLDKLKKFRKGKLKNLDFLEDAKALESKQKQSAENRKKRNKKFGFGGKKKGLKRNTKSSSAGLDGDKSSRRQRGVKAGASVNKRLGKSRRIKAKGRK</sequence>